<organism>
    <name type="scientific">Vibrio vulnificus (strain YJ016)</name>
    <dbReference type="NCBI Taxonomy" id="196600"/>
    <lineage>
        <taxon>Bacteria</taxon>
        <taxon>Pseudomonadati</taxon>
        <taxon>Pseudomonadota</taxon>
        <taxon>Gammaproteobacteria</taxon>
        <taxon>Vibrionales</taxon>
        <taxon>Vibrionaceae</taxon>
        <taxon>Vibrio</taxon>
    </lineage>
</organism>
<proteinExistence type="inferred from homology"/>
<name>COAA_VIBVY</name>
<evidence type="ECO:0000255" key="1">
    <source>
        <dbReference type="HAMAP-Rule" id="MF_00215"/>
    </source>
</evidence>
<reference key="1">
    <citation type="journal article" date="2003" name="Genome Res.">
        <title>Comparative genome analysis of Vibrio vulnificus, a marine pathogen.</title>
        <authorList>
            <person name="Chen C.-Y."/>
            <person name="Wu K.-M."/>
            <person name="Chang Y.-C."/>
            <person name="Chang C.-H."/>
            <person name="Tsai H.-C."/>
            <person name="Liao T.-L."/>
            <person name="Liu Y.-M."/>
            <person name="Chen H.-J."/>
            <person name="Shen A.B.-T."/>
            <person name="Li J.-C."/>
            <person name="Su T.-L."/>
            <person name="Shao C.-P."/>
            <person name="Lee C.-T."/>
            <person name="Hor L.-I."/>
            <person name="Tsai S.-F."/>
        </authorList>
    </citation>
    <scope>NUCLEOTIDE SEQUENCE [LARGE SCALE GENOMIC DNA]</scope>
    <source>
        <strain>YJ016</strain>
    </source>
</reference>
<sequence>MSPFLSFSRATWSELRNSVPMTLSEEDLKALQGINENLTMQEAVEVYLPLSRLLNLYVQARQSRNSVLHQFLNNDEHAPPFVIGIAGSVAVGKSTTARVLCALLSRWENHPKVELVTTDGFLYPKKMLNQRGIMHKKGFPESYDMKKLVQFVSDVKAGKPELEVPVYSHITYDITEEVKRVDRPDVLIIEGLNVLQSGMDYPHDPHRVFVSDFLDFSIYVDAESNTIEQWYVERFLKFRKGAFTQPGSYFSHYTQLSEQQAIEKAQQIWRDINGINLTENILPTKERAQLILRKGQNHLVEEILLRK</sequence>
<protein>
    <recommendedName>
        <fullName evidence="1">Pantothenate kinase</fullName>
        <ecNumber evidence="1">2.7.1.33</ecNumber>
    </recommendedName>
    <alternativeName>
        <fullName evidence="1">Pantothenic acid kinase</fullName>
    </alternativeName>
</protein>
<accession>Q7MGQ9</accession>
<gene>
    <name evidence="1" type="primary">coaA</name>
    <name type="ordered locus">VV3168</name>
</gene>
<feature type="chain" id="PRO_0000194462" description="Pantothenate kinase">
    <location>
        <begin position="1"/>
        <end position="307"/>
    </location>
</feature>
<feature type="binding site" evidence="1">
    <location>
        <begin position="87"/>
        <end position="94"/>
    </location>
    <ligand>
        <name>ATP</name>
        <dbReference type="ChEBI" id="CHEBI:30616"/>
    </ligand>
</feature>
<dbReference type="EC" id="2.7.1.33" evidence="1"/>
<dbReference type="EMBL" id="BA000037">
    <property type="protein sequence ID" value="BAC95932.1"/>
    <property type="molecule type" value="Genomic_DNA"/>
</dbReference>
<dbReference type="RefSeq" id="WP_011151385.1">
    <property type="nucleotide sequence ID" value="NC_005139.1"/>
</dbReference>
<dbReference type="SMR" id="Q7MGQ9"/>
<dbReference type="STRING" id="672.VV93_v1c28840"/>
<dbReference type="KEGG" id="vvy:VV3168"/>
<dbReference type="PATRIC" id="fig|196600.6.peg.3136"/>
<dbReference type="eggNOG" id="COG1072">
    <property type="taxonomic scope" value="Bacteria"/>
</dbReference>
<dbReference type="HOGENOM" id="CLU_053818_1_1_6"/>
<dbReference type="UniPathway" id="UPA00241">
    <property type="reaction ID" value="UER00352"/>
</dbReference>
<dbReference type="Proteomes" id="UP000002675">
    <property type="component" value="Chromosome I"/>
</dbReference>
<dbReference type="GO" id="GO:0005737">
    <property type="term" value="C:cytoplasm"/>
    <property type="evidence" value="ECO:0007669"/>
    <property type="project" value="UniProtKB-SubCell"/>
</dbReference>
<dbReference type="GO" id="GO:0005524">
    <property type="term" value="F:ATP binding"/>
    <property type="evidence" value="ECO:0007669"/>
    <property type="project" value="UniProtKB-UniRule"/>
</dbReference>
<dbReference type="GO" id="GO:0004594">
    <property type="term" value="F:pantothenate kinase activity"/>
    <property type="evidence" value="ECO:0007669"/>
    <property type="project" value="UniProtKB-UniRule"/>
</dbReference>
<dbReference type="GO" id="GO:0015937">
    <property type="term" value="P:coenzyme A biosynthetic process"/>
    <property type="evidence" value="ECO:0007669"/>
    <property type="project" value="UniProtKB-UniRule"/>
</dbReference>
<dbReference type="CDD" id="cd02025">
    <property type="entry name" value="PanK"/>
    <property type="match status" value="1"/>
</dbReference>
<dbReference type="FunFam" id="3.40.50.300:FF:000242">
    <property type="entry name" value="Pantothenate kinase"/>
    <property type="match status" value="1"/>
</dbReference>
<dbReference type="Gene3D" id="3.40.50.300">
    <property type="entry name" value="P-loop containing nucleotide triphosphate hydrolases"/>
    <property type="match status" value="1"/>
</dbReference>
<dbReference type="HAMAP" id="MF_00215">
    <property type="entry name" value="Pantothen_kinase_1"/>
    <property type="match status" value="1"/>
</dbReference>
<dbReference type="InterPro" id="IPR027417">
    <property type="entry name" value="P-loop_NTPase"/>
</dbReference>
<dbReference type="InterPro" id="IPR004566">
    <property type="entry name" value="PanK"/>
</dbReference>
<dbReference type="InterPro" id="IPR006083">
    <property type="entry name" value="PRK/URK"/>
</dbReference>
<dbReference type="NCBIfam" id="TIGR00554">
    <property type="entry name" value="panK_bact"/>
    <property type="match status" value="1"/>
</dbReference>
<dbReference type="PANTHER" id="PTHR10285">
    <property type="entry name" value="URIDINE KINASE"/>
    <property type="match status" value="1"/>
</dbReference>
<dbReference type="Pfam" id="PF00485">
    <property type="entry name" value="PRK"/>
    <property type="match status" value="1"/>
</dbReference>
<dbReference type="PIRSF" id="PIRSF000545">
    <property type="entry name" value="Pantothenate_kin"/>
    <property type="match status" value="1"/>
</dbReference>
<dbReference type="SUPFAM" id="SSF52540">
    <property type="entry name" value="P-loop containing nucleoside triphosphate hydrolases"/>
    <property type="match status" value="1"/>
</dbReference>
<comment type="catalytic activity">
    <reaction evidence="1">
        <text>(R)-pantothenate + ATP = (R)-4'-phosphopantothenate + ADP + H(+)</text>
        <dbReference type="Rhea" id="RHEA:16373"/>
        <dbReference type="ChEBI" id="CHEBI:10986"/>
        <dbReference type="ChEBI" id="CHEBI:15378"/>
        <dbReference type="ChEBI" id="CHEBI:29032"/>
        <dbReference type="ChEBI" id="CHEBI:30616"/>
        <dbReference type="ChEBI" id="CHEBI:456216"/>
        <dbReference type="EC" id="2.7.1.33"/>
    </reaction>
</comment>
<comment type="pathway">
    <text evidence="1">Cofactor biosynthesis; coenzyme A biosynthesis; CoA from (R)-pantothenate: step 1/5.</text>
</comment>
<comment type="subcellular location">
    <subcellularLocation>
        <location evidence="1">Cytoplasm</location>
    </subcellularLocation>
</comment>
<comment type="similarity">
    <text evidence="1">Belongs to the prokaryotic pantothenate kinase family.</text>
</comment>
<keyword id="KW-0067">ATP-binding</keyword>
<keyword id="KW-0173">Coenzyme A biosynthesis</keyword>
<keyword id="KW-0963">Cytoplasm</keyword>
<keyword id="KW-0418">Kinase</keyword>
<keyword id="KW-0547">Nucleotide-binding</keyword>
<keyword id="KW-0808">Transferase</keyword>